<name>TATC_HAEIN</name>
<organism>
    <name type="scientific">Haemophilus influenzae (strain ATCC 51907 / DSM 11121 / KW20 / Rd)</name>
    <dbReference type="NCBI Taxonomy" id="71421"/>
    <lineage>
        <taxon>Bacteria</taxon>
        <taxon>Pseudomonadati</taxon>
        <taxon>Pseudomonadota</taxon>
        <taxon>Gammaproteobacteria</taxon>
        <taxon>Pasteurellales</taxon>
        <taxon>Pasteurellaceae</taxon>
        <taxon>Haemophilus</taxon>
    </lineage>
</organism>
<gene>
    <name evidence="1" type="primary">tatC</name>
    <name type="ordered locus">HI_0188</name>
</gene>
<keyword id="KW-0997">Cell inner membrane</keyword>
<keyword id="KW-1003">Cell membrane</keyword>
<keyword id="KW-0472">Membrane</keyword>
<keyword id="KW-0653">Protein transport</keyword>
<keyword id="KW-1185">Reference proteome</keyword>
<keyword id="KW-0811">Translocation</keyword>
<keyword id="KW-0812">Transmembrane</keyword>
<keyword id="KW-1133">Transmembrane helix</keyword>
<keyword id="KW-0813">Transport</keyword>
<proteinExistence type="inferred from homology"/>
<feature type="chain" id="PRO_0000098086" description="Sec-independent protein translocase protein TatC">
    <location>
        <begin position="1"/>
        <end position="256"/>
    </location>
</feature>
<feature type="transmembrane region" description="Helical" evidence="1">
    <location>
        <begin position="25"/>
        <end position="45"/>
    </location>
</feature>
<feature type="transmembrane region" description="Helical" evidence="1">
    <location>
        <begin position="77"/>
        <end position="97"/>
    </location>
</feature>
<feature type="transmembrane region" description="Helical" evidence="1">
    <location>
        <begin position="117"/>
        <end position="137"/>
    </location>
</feature>
<feature type="transmembrane region" description="Helical" evidence="1">
    <location>
        <begin position="158"/>
        <end position="178"/>
    </location>
</feature>
<feature type="transmembrane region" description="Helical" evidence="1">
    <location>
        <begin position="195"/>
        <end position="215"/>
    </location>
</feature>
<feature type="transmembrane region" description="Helical" evidence="1">
    <location>
        <begin position="217"/>
        <end position="237"/>
    </location>
</feature>
<comment type="function">
    <text evidence="1">Part of the twin-arginine translocation (Tat) system that transports large folded proteins containing a characteristic twin-arginine motif in their signal peptide across membranes. Together with TatB, TatC is part of a receptor directly interacting with Tat signal peptides.</text>
</comment>
<comment type="subunit">
    <text evidence="1">The Tat system comprises two distinct complexes: a TatABC complex, containing multiple copies of TatA, TatB and TatC subunits, and a separate TatA complex, containing only TatA subunits. Substrates initially bind to the TatABC complex, which probably triggers association of the separate TatA complex to form the active translocon.</text>
</comment>
<comment type="subcellular location">
    <subcellularLocation>
        <location evidence="1">Cell inner membrane</location>
        <topology evidence="1">Multi-pass membrane protein</topology>
    </subcellularLocation>
</comment>
<comment type="similarity">
    <text evidence="1">Belongs to the TatC family.</text>
</comment>
<dbReference type="EMBL" id="L42023">
    <property type="protein sequence ID" value="AAC21857.1"/>
    <property type="molecule type" value="Genomic_DNA"/>
</dbReference>
<dbReference type="PIR" id="C64145">
    <property type="entry name" value="C64145"/>
</dbReference>
<dbReference type="RefSeq" id="NP_438357.1">
    <property type="nucleotide sequence ID" value="NC_000907.1"/>
</dbReference>
<dbReference type="SMR" id="P44560"/>
<dbReference type="STRING" id="71421.HI_0188"/>
<dbReference type="EnsemblBacteria" id="AAC21857">
    <property type="protein sequence ID" value="AAC21857"/>
    <property type="gene ID" value="HI_0188"/>
</dbReference>
<dbReference type="KEGG" id="hin:HI_0188"/>
<dbReference type="PATRIC" id="fig|71421.8.peg.193"/>
<dbReference type="eggNOG" id="COG0805">
    <property type="taxonomic scope" value="Bacteria"/>
</dbReference>
<dbReference type="HOGENOM" id="CLU_031942_1_1_6"/>
<dbReference type="OrthoDB" id="9777044at2"/>
<dbReference type="PhylomeDB" id="P44560"/>
<dbReference type="BioCyc" id="HINF71421:G1GJ1-199-MONOMER"/>
<dbReference type="Proteomes" id="UP000000579">
    <property type="component" value="Chromosome"/>
</dbReference>
<dbReference type="GO" id="GO:0033281">
    <property type="term" value="C:TAT protein transport complex"/>
    <property type="evidence" value="ECO:0000318"/>
    <property type="project" value="GO_Central"/>
</dbReference>
<dbReference type="GO" id="GO:0009977">
    <property type="term" value="F:proton motive force dependent protein transmembrane transporter activity"/>
    <property type="evidence" value="ECO:0000318"/>
    <property type="project" value="GO_Central"/>
</dbReference>
<dbReference type="GO" id="GO:0065002">
    <property type="term" value="P:intracellular protein transmembrane transport"/>
    <property type="evidence" value="ECO:0000318"/>
    <property type="project" value="GO_Central"/>
</dbReference>
<dbReference type="GO" id="GO:0043953">
    <property type="term" value="P:protein transport by the Tat complex"/>
    <property type="evidence" value="ECO:0000318"/>
    <property type="project" value="GO_Central"/>
</dbReference>
<dbReference type="HAMAP" id="MF_00902">
    <property type="entry name" value="TatC"/>
    <property type="match status" value="1"/>
</dbReference>
<dbReference type="InterPro" id="IPR019820">
    <property type="entry name" value="Sec-indep_translocase_CS"/>
</dbReference>
<dbReference type="InterPro" id="IPR002033">
    <property type="entry name" value="TatC"/>
</dbReference>
<dbReference type="NCBIfam" id="TIGR00945">
    <property type="entry name" value="tatC"/>
    <property type="match status" value="1"/>
</dbReference>
<dbReference type="PANTHER" id="PTHR30371">
    <property type="entry name" value="SEC-INDEPENDENT PROTEIN TRANSLOCASE PROTEIN TATC"/>
    <property type="match status" value="1"/>
</dbReference>
<dbReference type="PANTHER" id="PTHR30371:SF0">
    <property type="entry name" value="SEC-INDEPENDENT PROTEIN TRANSLOCASE PROTEIN TATC, CHLOROPLASTIC-RELATED"/>
    <property type="match status" value="1"/>
</dbReference>
<dbReference type="Pfam" id="PF00902">
    <property type="entry name" value="TatC"/>
    <property type="match status" value="1"/>
</dbReference>
<dbReference type="PRINTS" id="PR01840">
    <property type="entry name" value="TATCFAMILY"/>
</dbReference>
<dbReference type="PROSITE" id="PS01218">
    <property type="entry name" value="TATC"/>
    <property type="match status" value="1"/>
</dbReference>
<accession>P44560</accession>
<reference key="1">
    <citation type="journal article" date="1995" name="Science">
        <title>Whole-genome random sequencing and assembly of Haemophilus influenzae Rd.</title>
        <authorList>
            <person name="Fleischmann R.D."/>
            <person name="Adams M.D."/>
            <person name="White O."/>
            <person name="Clayton R.A."/>
            <person name="Kirkness E.F."/>
            <person name="Kerlavage A.R."/>
            <person name="Bult C.J."/>
            <person name="Tomb J.-F."/>
            <person name="Dougherty B.A."/>
            <person name="Merrick J.M."/>
            <person name="McKenney K."/>
            <person name="Sutton G.G."/>
            <person name="FitzHugh W."/>
            <person name="Fields C.A."/>
            <person name="Gocayne J.D."/>
            <person name="Scott J.D."/>
            <person name="Shirley R."/>
            <person name="Liu L.-I."/>
            <person name="Glodek A."/>
            <person name="Kelley J.M."/>
            <person name="Weidman J.F."/>
            <person name="Phillips C.A."/>
            <person name="Spriggs T."/>
            <person name="Hedblom E."/>
            <person name="Cotton M.D."/>
            <person name="Utterback T.R."/>
            <person name="Hanna M.C."/>
            <person name="Nguyen D.T."/>
            <person name="Saudek D.M."/>
            <person name="Brandon R.C."/>
            <person name="Fine L.D."/>
            <person name="Fritchman J.L."/>
            <person name="Fuhrmann J.L."/>
            <person name="Geoghagen N.S.M."/>
            <person name="Gnehm C.L."/>
            <person name="McDonald L.A."/>
            <person name="Small K.V."/>
            <person name="Fraser C.M."/>
            <person name="Smith H.O."/>
            <person name="Venter J.C."/>
        </authorList>
    </citation>
    <scope>NUCLEOTIDE SEQUENCE [LARGE SCALE GENOMIC DNA]</scope>
    <source>
        <strain>ATCC 51907 / DSM 11121 / KW20 / Rd</strain>
    </source>
</reference>
<evidence type="ECO:0000255" key="1">
    <source>
        <dbReference type="HAMAP-Rule" id="MF_00902"/>
    </source>
</evidence>
<protein>
    <recommendedName>
        <fullName evidence="1">Sec-independent protein translocase protein TatC</fullName>
    </recommendedName>
</protein>
<sequence length="256" mass="28734">MSNVDESQPLITHLVELRNRLLRCVICVVLVFVALVYFSNDIYHFVAAPLTAVMPKGATMIATNIQTPFFTPIKLTAIVAIFISVPYLLYQIWAFIAPALYQHEKRMIYPLLFSSTILFYCGVAFAYYIVFPLVFSFFTQTAPEGVTIATDISSYLDFALALFLAFGVCFEVPIAIILLCWTGITTVKALSEKRPYIIVAAFFIGMLLTPPDVFSQTLLAIPMCLLFELGLLVARFYQPKDDESAVKNNDESEKTQ</sequence>